<accession>Q97RR9</accession>
<dbReference type="EC" id="2.7.1.50" evidence="1"/>
<dbReference type="EMBL" id="AE005672">
    <property type="protein sequence ID" value="AAK74865.1"/>
    <property type="molecule type" value="Genomic_DNA"/>
</dbReference>
<dbReference type="PIR" id="D97951">
    <property type="entry name" value="D97951"/>
</dbReference>
<dbReference type="PIR" id="H95083">
    <property type="entry name" value="H95083"/>
</dbReference>
<dbReference type="RefSeq" id="WP_001155185.1">
    <property type="nucleotide sequence ID" value="NZ_CP155539.1"/>
</dbReference>
<dbReference type="SMR" id="Q97RR9"/>
<dbReference type="PaxDb" id="170187-SP_0724"/>
<dbReference type="EnsemblBacteria" id="AAK74865">
    <property type="protein sequence ID" value="AAK74865"/>
    <property type="gene ID" value="SP_0724"/>
</dbReference>
<dbReference type="KEGG" id="spn:SP_0724"/>
<dbReference type="eggNOG" id="COG2145">
    <property type="taxonomic scope" value="Bacteria"/>
</dbReference>
<dbReference type="PhylomeDB" id="Q97RR9"/>
<dbReference type="BioCyc" id="SPNE170187:G1FZB-743-MONOMER"/>
<dbReference type="UniPathway" id="UPA00060">
    <property type="reaction ID" value="UER00139"/>
</dbReference>
<dbReference type="Proteomes" id="UP000000585">
    <property type="component" value="Chromosome"/>
</dbReference>
<dbReference type="GO" id="GO:0005524">
    <property type="term" value="F:ATP binding"/>
    <property type="evidence" value="ECO:0007669"/>
    <property type="project" value="UniProtKB-UniRule"/>
</dbReference>
<dbReference type="GO" id="GO:0004417">
    <property type="term" value="F:hydroxyethylthiazole kinase activity"/>
    <property type="evidence" value="ECO:0007669"/>
    <property type="project" value="UniProtKB-UniRule"/>
</dbReference>
<dbReference type="GO" id="GO:0000287">
    <property type="term" value="F:magnesium ion binding"/>
    <property type="evidence" value="ECO:0007669"/>
    <property type="project" value="UniProtKB-UniRule"/>
</dbReference>
<dbReference type="GO" id="GO:0009228">
    <property type="term" value="P:thiamine biosynthetic process"/>
    <property type="evidence" value="ECO:0007669"/>
    <property type="project" value="UniProtKB-KW"/>
</dbReference>
<dbReference type="GO" id="GO:0009229">
    <property type="term" value="P:thiamine diphosphate biosynthetic process"/>
    <property type="evidence" value="ECO:0007669"/>
    <property type="project" value="UniProtKB-UniRule"/>
</dbReference>
<dbReference type="CDD" id="cd01170">
    <property type="entry name" value="THZ_kinase"/>
    <property type="match status" value="1"/>
</dbReference>
<dbReference type="Gene3D" id="3.40.1190.20">
    <property type="match status" value="1"/>
</dbReference>
<dbReference type="HAMAP" id="MF_00228">
    <property type="entry name" value="Thz_kinase"/>
    <property type="match status" value="1"/>
</dbReference>
<dbReference type="InterPro" id="IPR000417">
    <property type="entry name" value="Hyethyz_kinase"/>
</dbReference>
<dbReference type="InterPro" id="IPR029056">
    <property type="entry name" value="Ribokinase-like"/>
</dbReference>
<dbReference type="Pfam" id="PF02110">
    <property type="entry name" value="HK"/>
    <property type="match status" value="1"/>
</dbReference>
<dbReference type="PIRSF" id="PIRSF000513">
    <property type="entry name" value="Thz_kinase"/>
    <property type="match status" value="1"/>
</dbReference>
<dbReference type="PRINTS" id="PR01099">
    <property type="entry name" value="HYETHTZKNASE"/>
</dbReference>
<dbReference type="SUPFAM" id="SSF53613">
    <property type="entry name" value="Ribokinase-like"/>
    <property type="match status" value="1"/>
</dbReference>
<name>THIM2_STRPN</name>
<organism>
    <name type="scientific">Streptococcus pneumoniae serotype 4 (strain ATCC BAA-334 / TIGR4)</name>
    <dbReference type="NCBI Taxonomy" id="170187"/>
    <lineage>
        <taxon>Bacteria</taxon>
        <taxon>Bacillati</taxon>
        <taxon>Bacillota</taxon>
        <taxon>Bacilli</taxon>
        <taxon>Lactobacillales</taxon>
        <taxon>Streptococcaceae</taxon>
        <taxon>Streptococcus</taxon>
    </lineage>
</organism>
<keyword id="KW-0067">ATP-binding</keyword>
<keyword id="KW-0418">Kinase</keyword>
<keyword id="KW-0460">Magnesium</keyword>
<keyword id="KW-0479">Metal-binding</keyword>
<keyword id="KW-0547">Nucleotide-binding</keyword>
<keyword id="KW-1185">Reference proteome</keyword>
<keyword id="KW-0784">Thiamine biosynthesis</keyword>
<keyword id="KW-0808">Transferase</keyword>
<reference key="1">
    <citation type="journal article" date="2001" name="Science">
        <title>Complete genome sequence of a virulent isolate of Streptococcus pneumoniae.</title>
        <authorList>
            <person name="Tettelin H."/>
            <person name="Nelson K.E."/>
            <person name="Paulsen I.T."/>
            <person name="Eisen J.A."/>
            <person name="Read T.D."/>
            <person name="Peterson S.N."/>
            <person name="Heidelberg J.F."/>
            <person name="DeBoy R.T."/>
            <person name="Haft D.H."/>
            <person name="Dodson R.J."/>
            <person name="Durkin A.S."/>
            <person name="Gwinn M.L."/>
            <person name="Kolonay J.F."/>
            <person name="Nelson W.C."/>
            <person name="Peterson J.D."/>
            <person name="Umayam L.A."/>
            <person name="White O."/>
            <person name="Salzberg S.L."/>
            <person name="Lewis M.R."/>
            <person name="Radune D."/>
            <person name="Holtzapple E.K."/>
            <person name="Khouri H.M."/>
            <person name="Wolf A.M."/>
            <person name="Utterback T.R."/>
            <person name="Hansen C.L."/>
            <person name="McDonald L.A."/>
            <person name="Feldblyum T.V."/>
            <person name="Angiuoli S.V."/>
            <person name="Dickinson T."/>
            <person name="Hickey E.K."/>
            <person name="Holt I.E."/>
            <person name="Loftus B.J."/>
            <person name="Yang F."/>
            <person name="Smith H.O."/>
            <person name="Venter J.C."/>
            <person name="Dougherty B.A."/>
            <person name="Morrison D.A."/>
            <person name="Hollingshead S.K."/>
            <person name="Fraser C.M."/>
        </authorList>
    </citation>
    <scope>NUCLEOTIDE SEQUENCE [LARGE SCALE GENOMIC DNA]</scope>
    <source>
        <strain>ATCC BAA-334 / TIGR4</strain>
    </source>
</reference>
<feature type="chain" id="PRO_0000383896" description="Hydroxyethylthiazole kinase 2">
    <location>
        <begin position="1"/>
        <end position="267"/>
    </location>
</feature>
<feature type="binding site" evidence="1">
    <location>
        <position position="41"/>
    </location>
    <ligand>
        <name>substrate</name>
    </ligand>
</feature>
<feature type="binding site" evidence="1">
    <location>
        <position position="116"/>
    </location>
    <ligand>
        <name>ATP</name>
        <dbReference type="ChEBI" id="CHEBI:30616"/>
    </ligand>
</feature>
<feature type="binding site" evidence="1">
    <location>
        <position position="166"/>
    </location>
    <ligand>
        <name>ATP</name>
        <dbReference type="ChEBI" id="CHEBI:30616"/>
    </ligand>
</feature>
<feature type="binding site" evidence="1">
    <location>
        <position position="193"/>
    </location>
    <ligand>
        <name>substrate</name>
    </ligand>
</feature>
<gene>
    <name evidence="1" type="primary">thiM2</name>
    <name type="ordered locus">SP_0724</name>
</gene>
<protein>
    <recommendedName>
        <fullName evidence="1">Hydroxyethylthiazole kinase 2</fullName>
        <ecNumber evidence="1">2.7.1.50</ecNumber>
    </recommendedName>
    <alternativeName>
        <fullName evidence="1">4-methyl-5-beta-hydroxyethylthiazole kinase 2</fullName>
        <shortName evidence="1">TH kinase 2</shortName>
        <shortName evidence="1">Thz kinase 2</shortName>
    </alternativeName>
</protein>
<evidence type="ECO:0000255" key="1">
    <source>
        <dbReference type="HAMAP-Rule" id="MF_00228"/>
    </source>
</evidence>
<comment type="function">
    <text evidence="1">Catalyzes the phosphorylation of the hydroxyl group of 4-methyl-5-beta-hydroxyethylthiazole (THZ).</text>
</comment>
<comment type="catalytic activity">
    <reaction evidence="1">
        <text>5-(2-hydroxyethyl)-4-methylthiazole + ATP = 4-methyl-5-(2-phosphooxyethyl)-thiazole + ADP + H(+)</text>
        <dbReference type="Rhea" id="RHEA:24212"/>
        <dbReference type="ChEBI" id="CHEBI:15378"/>
        <dbReference type="ChEBI" id="CHEBI:17957"/>
        <dbReference type="ChEBI" id="CHEBI:30616"/>
        <dbReference type="ChEBI" id="CHEBI:58296"/>
        <dbReference type="ChEBI" id="CHEBI:456216"/>
        <dbReference type="EC" id="2.7.1.50"/>
    </reaction>
</comment>
<comment type="cofactor">
    <cofactor evidence="1">
        <name>Mg(2+)</name>
        <dbReference type="ChEBI" id="CHEBI:18420"/>
    </cofactor>
</comment>
<comment type="pathway">
    <text evidence="1">Cofactor biosynthesis; thiamine diphosphate biosynthesis; 4-methyl-5-(2-phosphoethyl)-thiazole from 5-(2-hydroxyethyl)-4-methylthiazole: step 1/1.</text>
</comment>
<comment type="similarity">
    <text evidence="1">Belongs to the Thz kinase family.</text>
</comment>
<sequence length="267" mass="29081">MQEFTNPFPIGSSSLIHCITNEISCEMLANGILALGCKPVMADDSREVLDFTKQSQALFINLGHLSAEKEKAIRMAASYANQSSLPMVVDAVGVTTSSIRKSLVKDLLDYRPTVLKGNMSEIRSLVGLKHHGVGVDASAKDQETEDLLQVLKDWCQTYPGMSFLVTGPKDLVVSKNQVAVLGNGCTELDWITGTGDLVGALTAVFLSQGKTGFEASCLAVSYLNIAAEKIVVQGMGLEEFRYQVLNQLSLLRRDENWLDTIKGEVYE</sequence>
<proteinExistence type="inferred from homology"/>